<feature type="chain" id="PRO_0000351707" description="L-rhamnonate dehydratase">
    <location>
        <begin position="1"/>
        <end position="405"/>
    </location>
</feature>
<feature type="active site" description="Proton acceptor">
    <location>
        <position position="329"/>
    </location>
</feature>
<feature type="binding site">
    <location>
        <position position="33"/>
    </location>
    <ligand>
        <name>substrate</name>
    </ligand>
</feature>
<feature type="binding site">
    <location>
        <position position="59"/>
    </location>
    <ligand>
        <name>substrate</name>
    </ligand>
</feature>
<feature type="binding site">
    <location>
        <position position="226"/>
    </location>
    <ligand>
        <name>Mg(2+)</name>
        <dbReference type="ChEBI" id="CHEBI:18420"/>
    </ligand>
</feature>
<feature type="binding site">
    <location>
        <position position="252"/>
    </location>
    <ligand>
        <name>Mg(2+)</name>
        <dbReference type="ChEBI" id="CHEBI:18420"/>
    </ligand>
</feature>
<feature type="binding site">
    <location>
        <position position="280"/>
    </location>
    <ligand>
        <name>Mg(2+)</name>
        <dbReference type="ChEBI" id="CHEBI:18420"/>
    </ligand>
</feature>
<feature type="binding site">
    <location>
        <position position="349"/>
    </location>
    <ligand>
        <name>substrate</name>
    </ligand>
</feature>
<feature type="site" description="Increases basicity of active site His">
    <location>
        <position position="302"/>
    </location>
</feature>
<feature type="site" description="Transition state stabilizer">
    <location>
        <position position="349"/>
    </location>
</feature>
<feature type="strand" evidence="3">
    <location>
        <begin position="9"/>
        <end position="20"/>
    </location>
</feature>
<feature type="helix" evidence="3">
    <location>
        <begin position="40"/>
        <end position="42"/>
    </location>
</feature>
<feature type="turn" evidence="3">
    <location>
        <begin position="48"/>
        <end position="51"/>
    </location>
</feature>
<feature type="helix" evidence="3">
    <location>
        <begin position="53"/>
        <end position="55"/>
    </location>
</feature>
<feature type="helix" evidence="3">
    <location>
        <begin position="60"/>
        <end position="62"/>
    </location>
</feature>
<feature type="turn" evidence="3">
    <location>
        <begin position="63"/>
        <end position="65"/>
    </location>
</feature>
<feature type="strand" evidence="3">
    <location>
        <begin position="69"/>
        <end position="76"/>
    </location>
</feature>
<feature type="strand" evidence="3">
    <location>
        <begin position="81"/>
        <end position="87"/>
    </location>
</feature>
<feature type="helix" evidence="3">
    <location>
        <begin position="89"/>
        <end position="98"/>
    </location>
</feature>
<feature type="helix" evidence="3">
    <location>
        <begin position="101"/>
        <end position="104"/>
    </location>
</feature>
<feature type="helix" evidence="3">
    <location>
        <begin position="112"/>
        <end position="123"/>
    </location>
</feature>
<feature type="turn" evidence="3">
    <location>
        <begin position="124"/>
        <end position="126"/>
    </location>
</feature>
<feature type="helix" evidence="3">
    <location>
        <begin position="132"/>
        <end position="152"/>
    </location>
</feature>
<feature type="helix" evidence="3">
    <location>
        <begin position="156"/>
        <end position="159"/>
    </location>
</feature>
<feature type="strand" evidence="3">
    <location>
        <begin position="164"/>
        <end position="175"/>
    </location>
</feature>
<feature type="helix" evidence="3">
    <location>
        <begin position="177"/>
        <end position="183"/>
    </location>
</feature>
<feature type="strand" evidence="3">
    <location>
        <begin position="186"/>
        <end position="191"/>
    </location>
</feature>
<feature type="helix" evidence="3">
    <location>
        <begin position="196"/>
        <end position="198"/>
    </location>
</feature>
<feature type="helix" evidence="3">
    <location>
        <begin position="199"/>
        <end position="217"/>
    </location>
</feature>
<feature type="strand" evidence="3">
    <location>
        <begin position="219"/>
        <end position="226"/>
    </location>
</feature>
<feature type="helix" evidence="3">
    <location>
        <begin position="233"/>
        <end position="243"/>
    </location>
</feature>
<feature type="helix" evidence="3">
    <location>
        <begin position="244"/>
        <end position="246"/>
    </location>
</feature>
<feature type="strand" evidence="3">
    <location>
        <begin position="250"/>
        <end position="252"/>
    </location>
</feature>
<feature type="helix" evidence="3">
    <location>
        <begin position="260"/>
        <end position="269"/>
    </location>
</feature>
<feature type="strand" evidence="3">
    <location>
        <begin position="275"/>
        <end position="278"/>
    </location>
</feature>
<feature type="helix" evidence="3">
    <location>
        <begin position="285"/>
        <end position="293"/>
    </location>
</feature>
<feature type="strand" evidence="3">
    <location>
        <begin position="297"/>
        <end position="299"/>
    </location>
</feature>
<feature type="helix" evidence="3">
    <location>
        <begin position="303"/>
        <end position="306"/>
    </location>
</feature>
<feature type="helix" evidence="3">
    <location>
        <begin position="309"/>
        <end position="321"/>
    </location>
</feature>
<feature type="helix" evidence="3">
    <location>
        <begin position="332"/>
        <end position="339"/>
    </location>
</feature>
<feature type="strand" evidence="3">
    <location>
        <begin position="348"/>
        <end position="351"/>
    </location>
</feature>
<feature type="strand" evidence="3">
    <location>
        <begin position="357"/>
        <end position="359"/>
    </location>
</feature>
<feature type="turn" evidence="3">
    <location>
        <begin position="363"/>
        <end position="367"/>
    </location>
</feature>
<feature type="strand" evidence="3">
    <location>
        <begin position="378"/>
        <end position="380"/>
    </location>
</feature>
<feature type="helix" evidence="3">
    <location>
        <begin position="381"/>
        <end position="384"/>
    </location>
</feature>
<feature type="strand" evidence="3">
    <location>
        <begin position="386"/>
        <end position="388"/>
    </location>
</feature>
<proteinExistence type="evidence at protein level"/>
<name>RHMD_SALTY</name>
<gene>
    <name type="primary">rhmD</name>
    <name type="synonym">yfaW</name>
    <name type="ordered locus">STM2291</name>
</gene>
<organism>
    <name type="scientific">Salmonella typhimurium (strain LT2 / SGSC1412 / ATCC 700720)</name>
    <dbReference type="NCBI Taxonomy" id="99287"/>
    <lineage>
        <taxon>Bacteria</taxon>
        <taxon>Pseudomonadati</taxon>
        <taxon>Pseudomonadota</taxon>
        <taxon>Gammaproteobacteria</taxon>
        <taxon>Enterobacterales</taxon>
        <taxon>Enterobacteriaceae</taxon>
        <taxon>Salmonella</taxon>
    </lineage>
</organism>
<reference key="1">
    <citation type="journal article" date="2001" name="Nature">
        <title>Complete genome sequence of Salmonella enterica serovar Typhimurium LT2.</title>
        <authorList>
            <person name="McClelland M."/>
            <person name="Sanderson K.E."/>
            <person name="Spieth J."/>
            <person name="Clifton S.W."/>
            <person name="Latreille P."/>
            <person name="Courtney L."/>
            <person name="Porwollik S."/>
            <person name="Ali J."/>
            <person name="Dante M."/>
            <person name="Du F."/>
            <person name="Hou S."/>
            <person name="Layman D."/>
            <person name="Leonard S."/>
            <person name="Nguyen C."/>
            <person name="Scott K."/>
            <person name="Holmes A."/>
            <person name="Grewal N."/>
            <person name="Mulvaney E."/>
            <person name="Ryan E."/>
            <person name="Sun H."/>
            <person name="Florea L."/>
            <person name="Miller W."/>
            <person name="Stoneking T."/>
            <person name="Nhan M."/>
            <person name="Waterston R."/>
            <person name="Wilson R.K."/>
        </authorList>
    </citation>
    <scope>NUCLEOTIDE SEQUENCE [LARGE SCALE GENOMIC DNA]</scope>
    <source>
        <strain>LT2 / SGSC1412 / ATCC 700720</strain>
    </source>
</reference>
<reference key="2">
    <citation type="journal article" date="2008" name="Biochemistry">
        <title>Evolution of enzymatic activities in the enolase superfamily: L-rhamnonate dehydratase.</title>
        <authorList>
            <person name="Rakus J.F."/>
            <person name="Fedorov A.A."/>
            <person name="Fedorov E.V."/>
            <person name="Glasner M.E."/>
            <person name="Hubbard B.K."/>
            <person name="Delli J.D."/>
            <person name="Babbitt P.C."/>
            <person name="Almo S.C."/>
            <person name="Gerlt J.A."/>
        </authorList>
    </citation>
    <scope>X-RAY CRYSTALLOGRAPHY (1.8 ANGSTROMS) IN COMPLEXES WITH MAGNESIUM AND SUBSTRATE ANALOG</scope>
    <scope>FUNCTION</scope>
    <scope>SUBSTRATE SPECIFICITY</scope>
    <scope>COFACTOR</scope>
    <scope>KINETIC PARAMETERS</scope>
    <scope>SUBUNIT</scope>
    <scope>CATALYTIC MECHANISM</scope>
    <scope>REACTION STEREOCHEMISTRY</scope>
    <source>
        <strain>LT2 / SGSC1412 / ATCC 700720</strain>
    </source>
</reference>
<protein>
    <recommendedName>
        <fullName>L-rhamnonate dehydratase</fullName>
        <shortName>RhamD</shortName>
        <ecNumber>4.2.1.90</ecNumber>
    </recommendedName>
</protein>
<dbReference type="EC" id="4.2.1.90"/>
<dbReference type="EMBL" id="AE006468">
    <property type="protein sequence ID" value="AAL21192.1"/>
    <property type="molecule type" value="Genomic_DNA"/>
</dbReference>
<dbReference type="RefSeq" id="NP_461233.1">
    <property type="nucleotide sequence ID" value="NC_003197.2"/>
</dbReference>
<dbReference type="RefSeq" id="WP_000427827.1">
    <property type="nucleotide sequence ID" value="NC_003197.2"/>
</dbReference>
<dbReference type="PDB" id="2GSH">
    <property type="method" value="X-ray"/>
    <property type="resolution" value="2.39 A"/>
    <property type="chains" value="A/B=2-405"/>
</dbReference>
<dbReference type="PDB" id="2P3Z">
    <property type="method" value="X-ray"/>
    <property type="resolution" value="1.80 A"/>
    <property type="chains" value="A/B=2-405"/>
</dbReference>
<dbReference type="PDB" id="3BOX">
    <property type="method" value="X-ray"/>
    <property type="resolution" value="1.80 A"/>
    <property type="chains" value="A/B=2-405"/>
</dbReference>
<dbReference type="PDB" id="3CXO">
    <property type="method" value="X-ray"/>
    <property type="resolution" value="2.00 A"/>
    <property type="chains" value="A/B=2-405"/>
</dbReference>
<dbReference type="PDB" id="3D46">
    <property type="method" value="X-ray"/>
    <property type="resolution" value="1.90 A"/>
    <property type="chains" value="A/B/C/D/E/F/G/H=1-405"/>
</dbReference>
<dbReference type="PDB" id="3D47">
    <property type="method" value="X-ray"/>
    <property type="resolution" value="1.80 A"/>
    <property type="chains" value="A/B/C/D/E/F/G/H=1-405"/>
</dbReference>
<dbReference type="PDBsum" id="2GSH"/>
<dbReference type="PDBsum" id="2P3Z"/>
<dbReference type="PDBsum" id="3BOX"/>
<dbReference type="PDBsum" id="3CXO"/>
<dbReference type="PDBsum" id="3D46"/>
<dbReference type="PDBsum" id="3D47"/>
<dbReference type="SMR" id="Q8ZNF9"/>
<dbReference type="STRING" id="99287.STM2291"/>
<dbReference type="PaxDb" id="99287-STM2291"/>
<dbReference type="DNASU" id="1253813"/>
<dbReference type="GeneID" id="1253813"/>
<dbReference type="KEGG" id="stm:STM2291"/>
<dbReference type="PATRIC" id="fig|99287.12.peg.2425"/>
<dbReference type="HOGENOM" id="CLU_030273_1_0_6"/>
<dbReference type="PhylomeDB" id="Q8ZNF9"/>
<dbReference type="BioCyc" id="SENT99287:STM2291-MONOMER"/>
<dbReference type="BRENDA" id="4.2.1.90">
    <property type="organism ID" value="5542"/>
</dbReference>
<dbReference type="EvolutionaryTrace" id="Q8ZNF9"/>
<dbReference type="Proteomes" id="UP000001014">
    <property type="component" value="Chromosome"/>
</dbReference>
<dbReference type="GO" id="GO:0016836">
    <property type="term" value="F:hydro-lyase activity"/>
    <property type="evidence" value="ECO:0000318"/>
    <property type="project" value="GO_Central"/>
</dbReference>
<dbReference type="GO" id="GO:0050032">
    <property type="term" value="F:L-rhamnonate dehydratase activity"/>
    <property type="evidence" value="ECO:0007669"/>
    <property type="project" value="UniProtKB-UniRule"/>
</dbReference>
<dbReference type="GO" id="GO:0000287">
    <property type="term" value="F:magnesium ion binding"/>
    <property type="evidence" value="ECO:0000318"/>
    <property type="project" value="GO_Central"/>
</dbReference>
<dbReference type="GO" id="GO:0009063">
    <property type="term" value="P:amino acid catabolic process"/>
    <property type="evidence" value="ECO:0007669"/>
    <property type="project" value="InterPro"/>
</dbReference>
<dbReference type="GO" id="GO:0016052">
    <property type="term" value="P:carbohydrate catabolic process"/>
    <property type="evidence" value="ECO:0000318"/>
    <property type="project" value="GO_Central"/>
</dbReference>
<dbReference type="CDD" id="cd03327">
    <property type="entry name" value="MR_like_2"/>
    <property type="match status" value="1"/>
</dbReference>
<dbReference type="FunFam" id="3.30.390.10:FF:000007">
    <property type="entry name" value="L-rhamnonate dehydratase"/>
    <property type="match status" value="1"/>
</dbReference>
<dbReference type="FunFam" id="3.20.20.120:FF:000005">
    <property type="entry name" value="Putative L-rhamnonate dehydratase"/>
    <property type="match status" value="1"/>
</dbReference>
<dbReference type="Gene3D" id="3.20.20.120">
    <property type="entry name" value="Enolase-like C-terminal domain"/>
    <property type="match status" value="1"/>
</dbReference>
<dbReference type="Gene3D" id="3.30.390.10">
    <property type="entry name" value="Enolase-like, N-terminal domain"/>
    <property type="match status" value="1"/>
</dbReference>
<dbReference type="HAMAP" id="MF_01288">
    <property type="entry name" value="Rhamnon_dehydrat"/>
    <property type="match status" value="1"/>
</dbReference>
<dbReference type="InterPro" id="IPR036849">
    <property type="entry name" value="Enolase-like_C_sf"/>
</dbReference>
<dbReference type="InterPro" id="IPR029017">
    <property type="entry name" value="Enolase-like_N"/>
</dbReference>
<dbReference type="InterPro" id="IPR029065">
    <property type="entry name" value="Enolase_C-like"/>
</dbReference>
<dbReference type="InterPro" id="IPR023444">
    <property type="entry name" value="L-Rhamnon_dehydrat"/>
</dbReference>
<dbReference type="InterPro" id="IPR018110">
    <property type="entry name" value="Mandel_Rmase/mucon_lact_enz_CS"/>
</dbReference>
<dbReference type="InterPro" id="IPR013342">
    <property type="entry name" value="Mandelate_racemase_C"/>
</dbReference>
<dbReference type="InterPro" id="IPR013341">
    <property type="entry name" value="Mandelate_racemase_N_dom"/>
</dbReference>
<dbReference type="InterPro" id="IPR046945">
    <property type="entry name" value="RHMD-like"/>
</dbReference>
<dbReference type="NCBIfam" id="NF011968">
    <property type="entry name" value="PRK15440.1"/>
    <property type="match status" value="1"/>
</dbReference>
<dbReference type="PANTHER" id="PTHR13794">
    <property type="entry name" value="ENOLASE SUPERFAMILY, MANDELATE RACEMASE"/>
    <property type="match status" value="1"/>
</dbReference>
<dbReference type="PANTHER" id="PTHR13794:SF58">
    <property type="entry name" value="MITOCHONDRIAL ENOLASE SUPERFAMILY MEMBER 1"/>
    <property type="match status" value="1"/>
</dbReference>
<dbReference type="Pfam" id="PF13378">
    <property type="entry name" value="MR_MLE_C"/>
    <property type="match status" value="1"/>
</dbReference>
<dbReference type="Pfam" id="PF02746">
    <property type="entry name" value="MR_MLE_N"/>
    <property type="match status" value="1"/>
</dbReference>
<dbReference type="SFLD" id="SFLDG00179">
    <property type="entry name" value="mandelate_racemase"/>
    <property type="match status" value="1"/>
</dbReference>
<dbReference type="SFLD" id="SFLDF00006">
    <property type="entry name" value="rhamnonate_dehydratase"/>
    <property type="match status" value="1"/>
</dbReference>
<dbReference type="SMART" id="SM00922">
    <property type="entry name" value="MR_MLE"/>
    <property type="match status" value="1"/>
</dbReference>
<dbReference type="SUPFAM" id="SSF51604">
    <property type="entry name" value="Enolase C-terminal domain-like"/>
    <property type="match status" value="1"/>
</dbReference>
<dbReference type="SUPFAM" id="SSF54826">
    <property type="entry name" value="Enolase N-terminal domain-like"/>
    <property type="match status" value="1"/>
</dbReference>
<dbReference type="PROSITE" id="PS00908">
    <property type="entry name" value="MR_MLE_1"/>
    <property type="match status" value="1"/>
</dbReference>
<evidence type="ECO:0000269" key="1">
    <source>
    </source>
</evidence>
<evidence type="ECO:0000305" key="2"/>
<evidence type="ECO:0007829" key="3">
    <source>
        <dbReference type="PDB" id="2P3Z"/>
    </source>
</evidence>
<accession>Q8ZNF9</accession>
<keyword id="KW-0002">3D-structure</keyword>
<keyword id="KW-0456">Lyase</keyword>
<keyword id="KW-0460">Magnesium</keyword>
<keyword id="KW-0479">Metal-binding</keyword>
<keyword id="KW-1185">Reference proteome</keyword>
<sequence length="405" mass="44706">MENIMTLPKIKHVRAWFIGGATAEKGAGGGDYHDQGGNHWIDDHIATPMSKYRDYEQSRQSFGINVLGTLIVEVEAENRQTGFAVSTAGEMGCFIVEKHLNRFIEGKCVSDIKLIHDQMLGATMYYSGSGGLVMNTISCVDLALWDLFGKVVGLPVYKLLGGAVRDEIQFYATGARPDLAKEMGFIGGKMPTHWGPHDGDAGIRKDAAMVADMREKCGPDFWLMLDCWMSQDVNYATKLAHACAPFNLKWIEECLPPQQYEGYRELKRNAPAGMMVTSGEHHGTLQSFRTLAETGIDIMQPDVGWCGGLTTLVEIAALAKSRGQLVVPHGSSVYSHHAVITFTNTPFSEFLMTSPDCSTLRPQFDPILLDEPVPVNGRIHKSVLDKPGFGVELNRDCHLKRPYSH</sequence>
<comment type="function">
    <text evidence="1">Catalyzes the dehydration of L-rhamnonate to 2-keto-3-deoxy-L-rhamnonate (KDR). Can also dehydrate L-lyxonate and L-mannonate, although less efficiently, but not 2-keto-4-hydroxyheptane-1,7-dioate.</text>
</comment>
<comment type="catalytic activity">
    <reaction>
        <text>L-rhamnonate = 2-dehydro-3-deoxy-L-rhamnonate + H2O</text>
        <dbReference type="Rhea" id="RHEA:23080"/>
        <dbReference type="ChEBI" id="CHEBI:15377"/>
        <dbReference type="ChEBI" id="CHEBI:58118"/>
        <dbReference type="ChEBI" id="CHEBI:58371"/>
        <dbReference type="EC" id="4.2.1.90"/>
    </reaction>
</comment>
<comment type="cofactor">
    <cofactor evidence="1">
        <name>Mg(2+)</name>
        <dbReference type="ChEBI" id="CHEBI:18420"/>
    </cofactor>
    <text evidence="1">Binds 1 Mg(2+) ion per subunit.</text>
</comment>
<comment type="biophysicochemical properties">
    <kinetics>
        <KM evidence="1">0.25 mM for L-rhamnonate</KM>
        <KM evidence="1">1.6 mM for L-lyxonate</KM>
        <KM evidence="1">0.06 mM for L-mannonate</KM>
        <text>The catalytic efficiency observed with L-rhamnonate as substrate is 533- and 8-fold higher than that observed with L-lyxonate and L-mannonate, respectively.</text>
    </kinetics>
</comment>
<comment type="subunit">
    <text evidence="1">Homooctamer; tetramer of dimers.</text>
</comment>
<comment type="miscellaneous">
    <text>Reaction proceeds via a syn dehydration.</text>
</comment>
<comment type="similarity">
    <text evidence="2">Belongs to the mandelate racemase/muconate lactonizing enzyme family. RhamD subfamily.</text>
</comment>